<evidence type="ECO:0000250" key="1"/>
<evidence type="ECO:0000250" key="2">
    <source>
        <dbReference type="UniProtKB" id="Q9FFC0"/>
    </source>
</evidence>
<evidence type="ECO:0000250" key="3">
    <source>
        <dbReference type="UniProtKB" id="Q9LQQ4"/>
    </source>
</evidence>
<evidence type="ECO:0000256" key="4">
    <source>
        <dbReference type="SAM" id="MobiDB-lite"/>
    </source>
</evidence>
<evidence type="ECO:0000269" key="5">
    <source>
    </source>
</evidence>
<evidence type="ECO:0000305" key="6"/>
<sequence>MAPKAEKKPAEKKPVEEKSKAEKAPAEKKPKAGKKLPKEAGAGGDKKKKMKKKSVETYKIYIFKVLKQVHPDIGISSKAMGIMNSFINDIFEKLASESSKLARYNKKPTITSREIQTAVRLVLPGELAKHAVSEGTKAVTKFTSS</sequence>
<feature type="initiator methionine" description="Removed" evidence="6">
    <location>
        <position position="1"/>
    </location>
</feature>
<feature type="chain" id="PRO_0000238694" description="Histone H2B.7">
    <location>
        <begin position="2"/>
        <end position="145"/>
    </location>
</feature>
<feature type="region of interest" description="Disordered" evidence="4">
    <location>
        <begin position="1"/>
        <end position="53"/>
    </location>
</feature>
<feature type="compositionally biased region" description="Basic and acidic residues" evidence="4">
    <location>
        <begin position="1"/>
        <end position="30"/>
    </location>
</feature>
<feature type="modified residue" description="N,N,N-trimethylalanine; alternate" evidence="5">
    <location>
        <position position="2"/>
    </location>
</feature>
<feature type="modified residue" description="N,N-dimethylalanine; alternate" evidence="5">
    <location>
        <position position="2"/>
    </location>
</feature>
<feature type="modified residue" description="N-methylalanine; alternate" evidence="5">
    <location>
        <position position="2"/>
    </location>
</feature>
<feature type="modified residue" description="N6-methyllysine; partial" evidence="5">
    <location>
        <position position="4"/>
    </location>
</feature>
<feature type="modified residue" description="N6-acetyllysine" evidence="5">
    <location>
        <position position="7"/>
    </location>
</feature>
<feature type="modified residue" description="N6-acetyllysine" evidence="5">
    <location>
        <position position="12"/>
    </location>
</feature>
<feature type="modified residue" description="N6,N6-dimethyllysine" evidence="2">
    <location>
        <position position="13"/>
    </location>
</feature>
<feature type="modified residue" description="N6-acetyllysine" evidence="5">
    <location>
        <position position="23"/>
    </location>
</feature>
<feature type="modified residue" description="N6-acetyllysine" evidence="5">
    <location>
        <position position="28"/>
    </location>
</feature>
<feature type="modified residue" description="N6-acetyllysine" evidence="5">
    <location>
        <position position="34"/>
    </location>
</feature>
<feature type="modified residue" description="N6-acetyllysine; partial" evidence="5">
    <location>
        <position position="35"/>
    </location>
</feature>
<feature type="cross-link" description="Glycyl lysine isopeptide (Lys-Gly) (interchain with G-Cter in ubiquitin)" evidence="3">
    <location>
        <position position="141"/>
    </location>
</feature>
<accession>Q9LZT0</accession>
<comment type="function">
    <text>Core component of nucleosome. Nucleosomes wrap and compact DNA into chromatin, limiting DNA accessibility to the cellular machineries which require DNA as a template. Histones thereby play a central role in transcription regulation, DNA repair, DNA replication and chromosomal stability. DNA accessibility is regulated via a complex set of post-translational modifications of histones, also called histone code, and nucleosome remodeling.</text>
</comment>
<comment type="subunit">
    <text>The nucleosome is a histone octamer containing two molecules each of H2A, H2B, H3 and H4 assembled in one H3-H4 heterotetramer and two H2A-H2B heterodimers. The octamer wraps approximately 147 bp of DNA.</text>
</comment>
<comment type="subcellular location">
    <subcellularLocation>
        <location evidence="1">Nucleus</location>
    </subcellularLocation>
    <subcellularLocation>
        <location evidence="1">Chromosome</location>
    </subcellularLocation>
</comment>
<comment type="PTM">
    <text evidence="5">Can be acetylated to form H2BK6ac, H2BK11ac, H2BK22ac, H2BK27ac H2BK33ac and H2BK34ac.</text>
</comment>
<comment type="PTM">
    <text evidence="5">Mono-, di- or trimethylated at the N-terminus to form H2BA1me1/2/3. H2BA1me2 and H2BA1me3 may be methylated and/or acetylated to form H2BA1me2K3me1, H2BA1me2K3me1K6ac, H2BA1me2K6ac H2BA1me3K6ac, H2BA1me3K6acK11ac and H2BA1me2K3me1K6acK11ac.</text>
</comment>
<comment type="PTM">
    <text>Monoubiquitinated by BRE1 to form H2BK143ub1 and deubiquitinated by UBP26. Required for heterochromatic histone H3 di- and trimethylation at H3K4me. May give a specific tag for epigenetic transcriptional activation.</text>
</comment>
<comment type="similarity">
    <text evidence="6">Belongs to the histone H2B family.</text>
</comment>
<comment type="caution">
    <text evidence="6">To ensure consistency between histone entries, we follow the 'Brno' nomenclature for histone modifications, with positions referring to those used in the literature for the 'closest' model organism. Due to slight variations in histone sequences between organisms and to the presence of initiator methionine in UniProtKB/Swiss-Prot sequences, the actual positions of modified amino acids in the sequence generally differ. In this entry the following conventions are used: H2BA1me1/2/3 = mono-, di- and trimethylated Ala-2; H2BK3me1 = monomethylated Lys-4; H2BK6ac = acetylated Lys-7; H2BK11ac = acetylated Lys-12; H2BK22ac = acetylated Lys-23; H2BK27ac = acetylated Lys-28; H2BK33ac = acetylated Lys-34; H2BK34ac = acetylated Lys-35; H2BK143ub1 = monoubiquitinated Lys-141.</text>
</comment>
<reference key="1">
    <citation type="journal article" date="2000" name="Nature">
        <title>Sequence and analysis of chromosome 3 of the plant Arabidopsis thaliana.</title>
        <authorList>
            <person name="Salanoubat M."/>
            <person name="Lemcke K."/>
            <person name="Rieger M."/>
            <person name="Ansorge W."/>
            <person name="Unseld M."/>
            <person name="Fartmann B."/>
            <person name="Valle G."/>
            <person name="Bloecker H."/>
            <person name="Perez-Alonso M."/>
            <person name="Obermaier B."/>
            <person name="Delseny M."/>
            <person name="Boutry M."/>
            <person name="Grivell L.A."/>
            <person name="Mache R."/>
            <person name="Puigdomenech P."/>
            <person name="De Simone V."/>
            <person name="Choisne N."/>
            <person name="Artiguenave F."/>
            <person name="Robert C."/>
            <person name="Brottier P."/>
            <person name="Wincker P."/>
            <person name="Cattolico L."/>
            <person name="Weissenbach J."/>
            <person name="Saurin W."/>
            <person name="Quetier F."/>
            <person name="Schaefer M."/>
            <person name="Mueller-Auer S."/>
            <person name="Gabel C."/>
            <person name="Fuchs M."/>
            <person name="Benes V."/>
            <person name="Wurmbach E."/>
            <person name="Drzonek H."/>
            <person name="Erfle H."/>
            <person name="Jordan N."/>
            <person name="Bangert S."/>
            <person name="Wiedelmann R."/>
            <person name="Kranz H."/>
            <person name="Voss H."/>
            <person name="Holland R."/>
            <person name="Brandt P."/>
            <person name="Nyakatura G."/>
            <person name="Vezzi A."/>
            <person name="D'Angelo M."/>
            <person name="Pallavicini A."/>
            <person name="Toppo S."/>
            <person name="Simionati B."/>
            <person name="Conrad A."/>
            <person name="Hornischer K."/>
            <person name="Kauer G."/>
            <person name="Loehnert T.-H."/>
            <person name="Nordsiek G."/>
            <person name="Reichelt J."/>
            <person name="Scharfe M."/>
            <person name="Schoen O."/>
            <person name="Bargues M."/>
            <person name="Terol J."/>
            <person name="Climent J."/>
            <person name="Navarro P."/>
            <person name="Collado C."/>
            <person name="Perez-Perez A."/>
            <person name="Ottenwaelder B."/>
            <person name="Duchemin D."/>
            <person name="Cooke R."/>
            <person name="Laudie M."/>
            <person name="Berger-Llauro C."/>
            <person name="Purnelle B."/>
            <person name="Masuy D."/>
            <person name="de Haan M."/>
            <person name="Maarse A.C."/>
            <person name="Alcaraz J.-P."/>
            <person name="Cottet A."/>
            <person name="Casacuberta E."/>
            <person name="Monfort A."/>
            <person name="Argiriou A."/>
            <person name="Flores M."/>
            <person name="Liguori R."/>
            <person name="Vitale D."/>
            <person name="Mannhaupt G."/>
            <person name="Haase D."/>
            <person name="Schoof H."/>
            <person name="Rudd S."/>
            <person name="Zaccaria P."/>
            <person name="Mewes H.-W."/>
            <person name="Mayer K.F.X."/>
            <person name="Kaul S."/>
            <person name="Town C.D."/>
            <person name="Koo H.L."/>
            <person name="Tallon L.J."/>
            <person name="Jenkins J."/>
            <person name="Rooney T."/>
            <person name="Rizzo M."/>
            <person name="Walts A."/>
            <person name="Utterback T."/>
            <person name="Fujii C.Y."/>
            <person name="Shea T.P."/>
            <person name="Creasy T.H."/>
            <person name="Haas B."/>
            <person name="Maiti R."/>
            <person name="Wu D."/>
            <person name="Peterson J."/>
            <person name="Van Aken S."/>
            <person name="Pai G."/>
            <person name="Militscher J."/>
            <person name="Sellers P."/>
            <person name="Gill J.E."/>
            <person name="Feldblyum T.V."/>
            <person name="Preuss D."/>
            <person name="Lin X."/>
            <person name="Nierman W.C."/>
            <person name="Salzberg S.L."/>
            <person name="White O."/>
            <person name="Venter J.C."/>
            <person name="Fraser C.M."/>
            <person name="Kaneko T."/>
            <person name="Nakamura Y."/>
            <person name="Sato S."/>
            <person name="Kato T."/>
            <person name="Asamizu E."/>
            <person name="Sasamoto S."/>
            <person name="Kimura T."/>
            <person name="Idesawa K."/>
            <person name="Kawashima K."/>
            <person name="Kishida Y."/>
            <person name="Kiyokawa C."/>
            <person name="Kohara M."/>
            <person name="Matsumoto M."/>
            <person name="Matsuno A."/>
            <person name="Muraki A."/>
            <person name="Nakayama S."/>
            <person name="Nakazaki N."/>
            <person name="Shinpo S."/>
            <person name="Takeuchi C."/>
            <person name="Wada T."/>
            <person name="Watanabe A."/>
            <person name="Yamada M."/>
            <person name="Yasuda M."/>
            <person name="Tabata S."/>
        </authorList>
    </citation>
    <scope>NUCLEOTIDE SEQUENCE [LARGE SCALE GENOMIC DNA]</scope>
    <source>
        <strain>cv. Columbia</strain>
    </source>
</reference>
<reference key="2">
    <citation type="journal article" date="2017" name="Plant J.">
        <title>Araport11: a complete reannotation of the Arabidopsis thaliana reference genome.</title>
        <authorList>
            <person name="Cheng C.Y."/>
            <person name="Krishnakumar V."/>
            <person name="Chan A.P."/>
            <person name="Thibaud-Nissen F."/>
            <person name="Schobel S."/>
            <person name="Town C.D."/>
        </authorList>
    </citation>
    <scope>GENOME REANNOTATION</scope>
    <source>
        <strain>cv. Columbia</strain>
    </source>
</reference>
<reference key="3">
    <citation type="submission" date="2002-03" db="EMBL/GenBank/DDBJ databases">
        <title>Full-length cDNA from Arabidopsis thaliana.</title>
        <authorList>
            <person name="Brover V.V."/>
            <person name="Troukhan M.E."/>
            <person name="Alexandrov N.A."/>
            <person name="Lu Y.-P."/>
            <person name="Flavell R.B."/>
            <person name="Feldmann K.A."/>
        </authorList>
    </citation>
    <scope>NUCLEOTIDE SEQUENCE [LARGE SCALE MRNA]</scope>
</reference>
<reference key="4">
    <citation type="journal article" date="2007" name="Nature">
        <title>Control of DNA methylation and heterochromatic silencing by histone H2B deubiquitination.</title>
        <authorList>
            <person name="Sridhar V.V."/>
            <person name="Kapoor A."/>
            <person name="Zhang K."/>
            <person name="Zhu J."/>
            <person name="Zhou T."/>
            <person name="Hasegawa P.M."/>
            <person name="Bressan R.A."/>
            <person name="Zhu J.-K."/>
        </authorList>
    </citation>
    <scope>UBIQUITINATION AT LYS-141</scope>
    <scope>IDENTIFICATION BY MASS SPECTROMETRY</scope>
</reference>
<reference key="5">
    <citation type="journal article" date="2007" name="J. Proteome Res.">
        <title>Characterization of post-translational modifications of histone H2B-variants isolated from Arabidopsis thaliana.</title>
        <authorList>
            <person name="Bergmueller E."/>
            <person name="Gehrig P.M."/>
            <person name="Gruissem W."/>
        </authorList>
    </citation>
    <scope>ACETYLATION AT LYS-7; LYS-12; LYS-23; LYS-28; LYS-34 AND LYS-35</scope>
    <scope>METHYLATION AT ALA-2 AND LYS-4</scope>
    <scope>IDENTIFICATION BY MASS SPECTROMETRY</scope>
</reference>
<name>H2B7_ARATH</name>
<proteinExistence type="evidence at protein level"/>
<organism>
    <name type="scientific">Arabidopsis thaliana</name>
    <name type="common">Mouse-ear cress</name>
    <dbReference type="NCBI Taxonomy" id="3702"/>
    <lineage>
        <taxon>Eukaryota</taxon>
        <taxon>Viridiplantae</taxon>
        <taxon>Streptophyta</taxon>
        <taxon>Embryophyta</taxon>
        <taxon>Tracheophyta</taxon>
        <taxon>Spermatophyta</taxon>
        <taxon>Magnoliopsida</taxon>
        <taxon>eudicotyledons</taxon>
        <taxon>Gunneridae</taxon>
        <taxon>Pentapetalae</taxon>
        <taxon>rosids</taxon>
        <taxon>malvids</taxon>
        <taxon>Brassicales</taxon>
        <taxon>Brassicaceae</taxon>
        <taxon>Camelineae</taxon>
        <taxon>Arabidopsis</taxon>
    </lineage>
</organism>
<keyword id="KW-0007">Acetylation</keyword>
<keyword id="KW-0158">Chromosome</keyword>
<keyword id="KW-0238">DNA-binding</keyword>
<keyword id="KW-1017">Isopeptide bond</keyword>
<keyword id="KW-0488">Methylation</keyword>
<keyword id="KW-0544">Nucleosome core</keyword>
<keyword id="KW-0539">Nucleus</keyword>
<keyword id="KW-1185">Reference proteome</keyword>
<keyword id="KW-0832">Ubl conjugation</keyword>
<dbReference type="EMBL" id="AL162459">
    <property type="protein sequence ID" value="CAB88327.1"/>
    <property type="molecule type" value="Genomic_DNA"/>
</dbReference>
<dbReference type="EMBL" id="CP002686">
    <property type="protein sequence ID" value="AEE78103.1"/>
    <property type="molecule type" value="Genomic_DNA"/>
</dbReference>
<dbReference type="EMBL" id="AY084352">
    <property type="protein sequence ID" value="AAM60934.1"/>
    <property type="molecule type" value="mRNA"/>
</dbReference>
<dbReference type="SMR" id="Q9LZT0"/>
<dbReference type="FunCoup" id="Q9LZT0">
    <property type="interactions" value="2154"/>
</dbReference>
<dbReference type="STRING" id="3702.Q9LZT0"/>
<dbReference type="iPTMnet" id="Q9LZT0"/>
<dbReference type="PaxDb" id="3702-AT3G46030.1"/>
<dbReference type="EnsemblPlants" id="AT3G46030.1">
    <property type="protein sequence ID" value="AT3G46030.1"/>
    <property type="gene ID" value="AT3G46030"/>
</dbReference>
<dbReference type="Gramene" id="AT3G46030.1">
    <property type="protein sequence ID" value="AT3G46030.1"/>
    <property type="gene ID" value="AT3G46030"/>
</dbReference>
<dbReference type="KEGG" id="ath:AT3G46030"/>
<dbReference type="Araport" id="AT3G46030"/>
<dbReference type="TAIR" id="AT3G46030">
    <property type="gene designation" value="HTB11"/>
</dbReference>
<dbReference type="eggNOG" id="KOG1744">
    <property type="taxonomic scope" value="Eukaryota"/>
</dbReference>
<dbReference type="HOGENOM" id="CLU_075666_1_0_1"/>
<dbReference type="InParanoid" id="Q9LZT0"/>
<dbReference type="OMA" id="PLVCHIS"/>
<dbReference type="OrthoDB" id="1913820at2759"/>
<dbReference type="PhylomeDB" id="Q9LZT0"/>
<dbReference type="CD-CODE" id="4299E36E">
    <property type="entry name" value="Nucleolus"/>
</dbReference>
<dbReference type="PRO" id="PR:Q9LZT0"/>
<dbReference type="Proteomes" id="UP000006548">
    <property type="component" value="Chromosome 3"/>
</dbReference>
<dbReference type="ExpressionAtlas" id="Q9LZT0">
    <property type="expression patterns" value="baseline and differential"/>
</dbReference>
<dbReference type="GO" id="GO:0005829">
    <property type="term" value="C:cytosol"/>
    <property type="evidence" value="ECO:0007005"/>
    <property type="project" value="TAIR"/>
</dbReference>
<dbReference type="GO" id="GO:0000786">
    <property type="term" value="C:nucleosome"/>
    <property type="evidence" value="ECO:0007669"/>
    <property type="project" value="UniProtKB-KW"/>
</dbReference>
<dbReference type="GO" id="GO:0005634">
    <property type="term" value="C:nucleus"/>
    <property type="evidence" value="ECO:0007669"/>
    <property type="project" value="UniProtKB-SubCell"/>
</dbReference>
<dbReference type="GO" id="GO:0009506">
    <property type="term" value="C:plasmodesma"/>
    <property type="evidence" value="ECO:0007005"/>
    <property type="project" value="TAIR"/>
</dbReference>
<dbReference type="GO" id="GO:0003677">
    <property type="term" value="F:DNA binding"/>
    <property type="evidence" value="ECO:0007669"/>
    <property type="project" value="UniProtKB-KW"/>
</dbReference>
<dbReference type="GO" id="GO:0046982">
    <property type="term" value="F:protein heterodimerization activity"/>
    <property type="evidence" value="ECO:0007669"/>
    <property type="project" value="InterPro"/>
</dbReference>
<dbReference type="GO" id="GO:0030527">
    <property type="term" value="F:structural constituent of chromatin"/>
    <property type="evidence" value="ECO:0007669"/>
    <property type="project" value="InterPro"/>
</dbReference>
<dbReference type="CDD" id="cd22910">
    <property type="entry name" value="HFD_H2B"/>
    <property type="match status" value="1"/>
</dbReference>
<dbReference type="FunFam" id="1.10.20.10:FF:000014">
    <property type="entry name" value="Histone H2B"/>
    <property type="match status" value="1"/>
</dbReference>
<dbReference type="Gene3D" id="1.10.20.10">
    <property type="entry name" value="Histone, subunit A"/>
    <property type="match status" value="1"/>
</dbReference>
<dbReference type="InterPro" id="IPR009072">
    <property type="entry name" value="Histone-fold"/>
</dbReference>
<dbReference type="InterPro" id="IPR007125">
    <property type="entry name" value="Histone_H2A/H2B/H3"/>
</dbReference>
<dbReference type="InterPro" id="IPR000558">
    <property type="entry name" value="Histone_H2B"/>
</dbReference>
<dbReference type="InterPro" id="IPR055333">
    <property type="entry name" value="HISTONE_H2B_site"/>
</dbReference>
<dbReference type="PANTHER" id="PTHR23428">
    <property type="entry name" value="HISTONE H2B"/>
    <property type="match status" value="1"/>
</dbReference>
<dbReference type="Pfam" id="PF00125">
    <property type="entry name" value="Histone"/>
    <property type="match status" value="1"/>
</dbReference>
<dbReference type="PRINTS" id="PR00621">
    <property type="entry name" value="HISTONEH2B"/>
</dbReference>
<dbReference type="SMART" id="SM00427">
    <property type="entry name" value="H2B"/>
    <property type="match status" value="1"/>
</dbReference>
<dbReference type="SUPFAM" id="SSF47113">
    <property type="entry name" value="Histone-fold"/>
    <property type="match status" value="1"/>
</dbReference>
<dbReference type="PROSITE" id="PS00357">
    <property type="entry name" value="HISTONE_H2B"/>
    <property type="match status" value="1"/>
</dbReference>
<protein>
    <recommendedName>
        <fullName>Histone H2B.7</fullName>
    </recommendedName>
    <alternativeName>
        <fullName>HTB11</fullName>
    </alternativeName>
</protein>
<gene>
    <name type="ordered locus">At3g46030</name>
    <name type="ORF">F16L2.240</name>
</gene>